<name>LMA2_LOCMI</name>
<feature type="peptide" id="PRO_0000044156" description="Lom-AG-myotropin-2">
    <location>
        <begin position="1"/>
        <end position="15"/>
    </location>
</feature>
<dbReference type="GO" id="GO:0007218">
    <property type="term" value="P:neuropeptide signaling pathway"/>
    <property type="evidence" value="ECO:0007669"/>
    <property type="project" value="UniProtKB-KW"/>
</dbReference>
<comment type="function">
    <text>Myotropic peptide.</text>
</comment>
<comment type="tissue specificity">
    <text>Male accessory glands.</text>
</comment>
<proteinExistence type="evidence at protein level"/>
<sequence>AHRFAAEDFGALDTA</sequence>
<keyword id="KW-0903">Direct protein sequencing</keyword>
<keyword id="KW-0527">Neuropeptide</keyword>
<reference key="1">
    <citation type="journal article" date="1991" name="Insect Biochem.">
        <title>Isolation, identification and synthesis of Lom-AG-myotropin II, a novel peptide in the male accessory reproductive glands of Locusta migratoria.</title>
        <authorList>
            <person name="Paemen L."/>
            <person name="Schoofs L."/>
            <person name="Proost P."/>
            <person name="Decock B."/>
            <person name="de Loof A."/>
        </authorList>
    </citation>
    <scope>PROTEIN SEQUENCE</scope>
    <scope>SYNTHESIS</scope>
    <source>
        <tissue>Male accessory gland</tissue>
    </source>
</reference>
<accession>P38497</accession>
<protein>
    <recommendedName>
        <fullName>Lom-AG-myotropin-2</fullName>
    </recommendedName>
    <alternativeName>
        <fullName>Accessory gland myotropin II</fullName>
    </alternativeName>
    <alternativeName>
        <fullName>Lom-AG-myotropin II</fullName>
    </alternativeName>
</protein>
<organism>
    <name type="scientific">Locusta migratoria</name>
    <name type="common">Migratory locust</name>
    <dbReference type="NCBI Taxonomy" id="7004"/>
    <lineage>
        <taxon>Eukaryota</taxon>
        <taxon>Metazoa</taxon>
        <taxon>Ecdysozoa</taxon>
        <taxon>Arthropoda</taxon>
        <taxon>Hexapoda</taxon>
        <taxon>Insecta</taxon>
        <taxon>Pterygota</taxon>
        <taxon>Neoptera</taxon>
        <taxon>Polyneoptera</taxon>
        <taxon>Orthoptera</taxon>
        <taxon>Caelifera</taxon>
        <taxon>Acrididea</taxon>
        <taxon>Acridomorpha</taxon>
        <taxon>Acridoidea</taxon>
        <taxon>Acrididae</taxon>
        <taxon>Oedipodinae</taxon>
        <taxon>Locusta</taxon>
    </lineage>
</organism>